<dbReference type="EC" id="6.1.1.1" evidence="1"/>
<dbReference type="EMBL" id="AE000783">
    <property type="protein sequence ID" value="AAC66744.1"/>
    <property type="molecule type" value="Genomic_DNA"/>
</dbReference>
<dbReference type="PIR" id="A70146">
    <property type="entry name" value="A70146"/>
</dbReference>
<dbReference type="RefSeq" id="NP_212504.1">
    <property type="nucleotide sequence ID" value="NC_001318.1"/>
</dbReference>
<dbReference type="RefSeq" id="WP_002656396.1">
    <property type="nucleotide sequence ID" value="NC_001318.1"/>
</dbReference>
<dbReference type="SMR" id="O51343"/>
<dbReference type="STRING" id="224326.BB_0370"/>
<dbReference type="PaxDb" id="224326-BB_0370"/>
<dbReference type="EnsemblBacteria" id="AAC66744">
    <property type="protein sequence ID" value="AAC66744"/>
    <property type="gene ID" value="BB_0370"/>
</dbReference>
<dbReference type="GeneID" id="56567798"/>
<dbReference type="KEGG" id="bbu:BB_0370"/>
<dbReference type="PATRIC" id="fig|224326.49.peg.765"/>
<dbReference type="HOGENOM" id="CLU_024003_0_3_12"/>
<dbReference type="OrthoDB" id="9804243at2"/>
<dbReference type="Proteomes" id="UP000001807">
    <property type="component" value="Chromosome"/>
</dbReference>
<dbReference type="GO" id="GO:0005829">
    <property type="term" value="C:cytosol"/>
    <property type="evidence" value="ECO:0007669"/>
    <property type="project" value="TreeGrafter"/>
</dbReference>
<dbReference type="GO" id="GO:0005524">
    <property type="term" value="F:ATP binding"/>
    <property type="evidence" value="ECO:0007669"/>
    <property type="project" value="UniProtKB-UniRule"/>
</dbReference>
<dbReference type="GO" id="GO:0003723">
    <property type="term" value="F:RNA binding"/>
    <property type="evidence" value="ECO:0007669"/>
    <property type="project" value="UniProtKB-KW"/>
</dbReference>
<dbReference type="GO" id="GO:0004831">
    <property type="term" value="F:tyrosine-tRNA ligase activity"/>
    <property type="evidence" value="ECO:0007669"/>
    <property type="project" value="UniProtKB-UniRule"/>
</dbReference>
<dbReference type="GO" id="GO:0006437">
    <property type="term" value="P:tyrosyl-tRNA aminoacylation"/>
    <property type="evidence" value="ECO:0007669"/>
    <property type="project" value="UniProtKB-UniRule"/>
</dbReference>
<dbReference type="CDD" id="cd00165">
    <property type="entry name" value="S4"/>
    <property type="match status" value="1"/>
</dbReference>
<dbReference type="CDD" id="cd00805">
    <property type="entry name" value="TyrRS_core"/>
    <property type="match status" value="1"/>
</dbReference>
<dbReference type="FunFam" id="1.10.240.10:FF:000001">
    <property type="entry name" value="Tyrosine--tRNA ligase"/>
    <property type="match status" value="1"/>
</dbReference>
<dbReference type="Gene3D" id="3.40.50.620">
    <property type="entry name" value="HUPs"/>
    <property type="match status" value="1"/>
</dbReference>
<dbReference type="Gene3D" id="3.10.290.10">
    <property type="entry name" value="RNA-binding S4 domain"/>
    <property type="match status" value="1"/>
</dbReference>
<dbReference type="Gene3D" id="1.10.240.10">
    <property type="entry name" value="Tyrosyl-Transfer RNA Synthetase"/>
    <property type="match status" value="1"/>
</dbReference>
<dbReference type="HAMAP" id="MF_02006">
    <property type="entry name" value="Tyr_tRNA_synth_type1"/>
    <property type="match status" value="1"/>
</dbReference>
<dbReference type="InterPro" id="IPR002305">
    <property type="entry name" value="aa-tRNA-synth_Ic"/>
</dbReference>
<dbReference type="InterPro" id="IPR014729">
    <property type="entry name" value="Rossmann-like_a/b/a_fold"/>
</dbReference>
<dbReference type="InterPro" id="IPR002942">
    <property type="entry name" value="S4_RNA-bd"/>
</dbReference>
<dbReference type="InterPro" id="IPR036986">
    <property type="entry name" value="S4_RNA-bd_sf"/>
</dbReference>
<dbReference type="InterPro" id="IPR054608">
    <property type="entry name" value="SYY-like_C"/>
</dbReference>
<dbReference type="InterPro" id="IPR002307">
    <property type="entry name" value="Tyr-tRNA-ligase"/>
</dbReference>
<dbReference type="InterPro" id="IPR024088">
    <property type="entry name" value="Tyr-tRNA-ligase_bac-type"/>
</dbReference>
<dbReference type="InterPro" id="IPR024107">
    <property type="entry name" value="Tyr-tRNA-ligase_bac_1"/>
</dbReference>
<dbReference type="NCBIfam" id="TIGR00234">
    <property type="entry name" value="tyrS"/>
    <property type="match status" value="1"/>
</dbReference>
<dbReference type="PANTHER" id="PTHR11766:SF0">
    <property type="entry name" value="TYROSINE--TRNA LIGASE, MITOCHONDRIAL"/>
    <property type="match status" value="1"/>
</dbReference>
<dbReference type="PANTHER" id="PTHR11766">
    <property type="entry name" value="TYROSYL-TRNA SYNTHETASE"/>
    <property type="match status" value="1"/>
</dbReference>
<dbReference type="Pfam" id="PF22421">
    <property type="entry name" value="SYY_C-terminal"/>
    <property type="match status" value="1"/>
</dbReference>
<dbReference type="Pfam" id="PF00579">
    <property type="entry name" value="tRNA-synt_1b"/>
    <property type="match status" value="1"/>
</dbReference>
<dbReference type="PRINTS" id="PR01040">
    <property type="entry name" value="TRNASYNTHTYR"/>
</dbReference>
<dbReference type="SMART" id="SM00363">
    <property type="entry name" value="S4"/>
    <property type="match status" value="1"/>
</dbReference>
<dbReference type="SUPFAM" id="SSF55174">
    <property type="entry name" value="Alpha-L RNA-binding motif"/>
    <property type="match status" value="1"/>
</dbReference>
<dbReference type="SUPFAM" id="SSF52374">
    <property type="entry name" value="Nucleotidylyl transferase"/>
    <property type="match status" value="1"/>
</dbReference>
<dbReference type="PROSITE" id="PS50889">
    <property type="entry name" value="S4"/>
    <property type="match status" value="1"/>
</dbReference>
<proteinExistence type="inferred from homology"/>
<keyword id="KW-0030">Aminoacyl-tRNA synthetase</keyword>
<keyword id="KW-0067">ATP-binding</keyword>
<keyword id="KW-0963">Cytoplasm</keyword>
<keyword id="KW-0436">Ligase</keyword>
<keyword id="KW-0547">Nucleotide-binding</keyword>
<keyword id="KW-0648">Protein biosynthesis</keyword>
<keyword id="KW-1185">Reference proteome</keyword>
<keyword id="KW-0694">RNA-binding</keyword>
<sequence length="405" mass="46363">MNLALSLLHKRGFLKQCTSLKVLSDLMDREKIVFYAGVDATSSSLHIGHLIPFLAMMHLRQHGHMPIVLIGDSTAKIGDPSGKSEMRKILSSEEIGNNALLIKNQLQRITKFTSECFIHNSNWLDNLNYIEFLRDVGMHFSVNRMLSFETYKRRMDFGLSFIEFNYQLLQSYDYYMLNKIKNCRLQIGGDDQWGNIISGVDLIRKKNGSETFGLTFPLITRSDGKKMGKSEKGAVYLDSNLFSIYDFYQYFRNTSDSDVKTFLYLFTFLEEDEIELISNFKGNSLNKAKEILAFEITKIVHGEAEALKVQEASFAAFRGSGDRSNIPFFKFSFSSLKEEILLVDLMLDSKIVPSKSEGRRLIDSGGVYINGKRVESQSHLLTKKDFNNNEVELRVGKKKFLRIVI</sequence>
<name>SYY_BORBU</name>
<organism>
    <name type="scientific">Borreliella burgdorferi (strain ATCC 35210 / DSM 4680 / CIP 102532 / B31)</name>
    <name type="common">Borrelia burgdorferi</name>
    <dbReference type="NCBI Taxonomy" id="224326"/>
    <lineage>
        <taxon>Bacteria</taxon>
        <taxon>Pseudomonadati</taxon>
        <taxon>Spirochaetota</taxon>
        <taxon>Spirochaetia</taxon>
        <taxon>Spirochaetales</taxon>
        <taxon>Borreliaceae</taxon>
        <taxon>Borreliella</taxon>
    </lineage>
</organism>
<protein>
    <recommendedName>
        <fullName evidence="1">Tyrosine--tRNA ligase</fullName>
        <ecNumber evidence="1">6.1.1.1</ecNumber>
    </recommendedName>
    <alternativeName>
        <fullName evidence="1">Tyrosyl-tRNA synthetase</fullName>
        <shortName evidence="1">TyrRS</shortName>
    </alternativeName>
</protein>
<gene>
    <name evidence="1" type="primary">tyrS</name>
    <name type="ordered locus">BB_0370</name>
</gene>
<evidence type="ECO:0000255" key="1">
    <source>
        <dbReference type="HAMAP-Rule" id="MF_02006"/>
    </source>
</evidence>
<comment type="function">
    <text evidence="1">Catalyzes the attachment of tyrosine to tRNA(Tyr) in a two-step reaction: tyrosine is first activated by ATP to form Tyr-AMP and then transferred to the acceptor end of tRNA(Tyr).</text>
</comment>
<comment type="catalytic activity">
    <reaction evidence="1">
        <text>tRNA(Tyr) + L-tyrosine + ATP = L-tyrosyl-tRNA(Tyr) + AMP + diphosphate + H(+)</text>
        <dbReference type="Rhea" id="RHEA:10220"/>
        <dbReference type="Rhea" id="RHEA-COMP:9706"/>
        <dbReference type="Rhea" id="RHEA-COMP:9707"/>
        <dbReference type="ChEBI" id="CHEBI:15378"/>
        <dbReference type="ChEBI" id="CHEBI:30616"/>
        <dbReference type="ChEBI" id="CHEBI:33019"/>
        <dbReference type="ChEBI" id="CHEBI:58315"/>
        <dbReference type="ChEBI" id="CHEBI:78442"/>
        <dbReference type="ChEBI" id="CHEBI:78536"/>
        <dbReference type="ChEBI" id="CHEBI:456215"/>
        <dbReference type="EC" id="6.1.1.1"/>
    </reaction>
</comment>
<comment type="subunit">
    <text evidence="1">Homodimer.</text>
</comment>
<comment type="subcellular location">
    <subcellularLocation>
        <location evidence="1">Cytoplasm</location>
    </subcellularLocation>
</comment>
<comment type="similarity">
    <text evidence="1">Belongs to the class-I aminoacyl-tRNA synthetase family. TyrS type 1 subfamily.</text>
</comment>
<accession>O51343</accession>
<reference key="1">
    <citation type="journal article" date="1997" name="Nature">
        <title>Genomic sequence of a Lyme disease spirochaete, Borrelia burgdorferi.</title>
        <authorList>
            <person name="Fraser C.M."/>
            <person name="Casjens S."/>
            <person name="Huang W.M."/>
            <person name="Sutton G.G."/>
            <person name="Clayton R.A."/>
            <person name="Lathigra R."/>
            <person name="White O."/>
            <person name="Ketchum K.A."/>
            <person name="Dodson R.J."/>
            <person name="Hickey E.K."/>
            <person name="Gwinn M.L."/>
            <person name="Dougherty B.A."/>
            <person name="Tomb J.-F."/>
            <person name="Fleischmann R.D."/>
            <person name="Richardson D.L."/>
            <person name="Peterson J.D."/>
            <person name="Kerlavage A.R."/>
            <person name="Quackenbush J."/>
            <person name="Salzberg S.L."/>
            <person name="Hanson M."/>
            <person name="van Vugt R."/>
            <person name="Palmer N."/>
            <person name="Adams M.D."/>
            <person name="Gocayne J.D."/>
            <person name="Weidman J.F."/>
            <person name="Utterback T.R."/>
            <person name="Watthey L."/>
            <person name="McDonald L.A."/>
            <person name="Artiach P."/>
            <person name="Bowman C."/>
            <person name="Garland S.A."/>
            <person name="Fujii C."/>
            <person name="Cotton M.D."/>
            <person name="Horst K."/>
            <person name="Roberts K.M."/>
            <person name="Hatch B."/>
            <person name="Smith H.O."/>
            <person name="Venter J.C."/>
        </authorList>
    </citation>
    <scope>NUCLEOTIDE SEQUENCE [LARGE SCALE GENOMIC DNA]</scope>
    <source>
        <strain>ATCC 35210 / DSM 4680 / CIP 102532 / B31</strain>
    </source>
</reference>
<feature type="chain" id="PRO_0000055645" description="Tyrosine--tRNA ligase">
    <location>
        <begin position="1"/>
        <end position="405"/>
    </location>
</feature>
<feature type="domain" description="S4 RNA-binding" evidence="1">
    <location>
        <begin position="340"/>
        <end position="405"/>
    </location>
</feature>
<feature type="short sequence motif" description="'HIGH' region">
    <location>
        <begin position="40"/>
        <end position="49"/>
    </location>
</feature>
<feature type="short sequence motif" description="'KMSKS' region">
    <location>
        <begin position="226"/>
        <end position="230"/>
    </location>
</feature>
<feature type="binding site" evidence="1">
    <location>
        <position position="35"/>
    </location>
    <ligand>
        <name>L-tyrosine</name>
        <dbReference type="ChEBI" id="CHEBI:58315"/>
    </ligand>
</feature>
<feature type="binding site" evidence="1">
    <location>
        <position position="166"/>
    </location>
    <ligand>
        <name>L-tyrosine</name>
        <dbReference type="ChEBI" id="CHEBI:58315"/>
    </ligand>
</feature>
<feature type="binding site" evidence="1">
    <location>
        <position position="170"/>
    </location>
    <ligand>
        <name>L-tyrosine</name>
        <dbReference type="ChEBI" id="CHEBI:58315"/>
    </ligand>
</feature>
<feature type="binding site" evidence="1">
    <location>
        <position position="229"/>
    </location>
    <ligand>
        <name>ATP</name>
        <dbReference type="ChEBI" id="CHEBI:30616"/>
    </ligand>
</feature>